<evidence type="ECO:0000255" key="1">
    <source>
        <dbReference type="HAMAP-Rule" id="MF_03057"/>
    </source>
</evidence>
<accession>B4KN44</accession>
<name>SDF2A_DROMO</name>
<feature type="transit peptide" description="Mitochondrion" evidence="1">
    <location>
        <begin position="1"/>
        <end position="21"/>
    </location>
</feature>
<feature type="chain" id="PRO_0000383169" description="Succinate dehydrogenase assembly factor 2-A, mitochondrial">
    <location>
        <begin position="22"/>
        <end position="157"/>
    </location>
</feature>
<comment type="function">
    <text evidence="1">Plays an essential role in the assembly of succinate dehydrogenase (SDH), an enzyme complex (also referred to as respiratory complex II) that is a component of both the tricarboxylic acid (TCA) cycle and the mitochondrial electron transport chain, and which couples the oxidation of succinate to fumarate with the reduction of ubiquinone (coenzyme Q) to ubiquinol. Required for flavinylation (covalent attachment of FAD) of the flavoprotein subunit of the SDH catalytic dimer.</text>
</comment>
<comment type="subunit">
    <text evidence="1">Interacts with the flavoprotein subunit within the SDH catalytic dimer.</text>
</comment>
<comment type="subcellular location">
    <subcellularLocation>
        <location evidence="1">Mitochondrion matrix</location>
    </subcellularLocation>
</comment>
<comment type="similarity">
    <text evidence="1">Belongs to the SDHAF2 family.</text>
</comment>
<proteinExistence type="inferred from homology"/>
<organism>
    <name type="scientific">Drosophila mojavensis</name>
    <name type="common">Fruit fly</name>
    <dbReference type="NCBI Taxonomy" id="7230"/>
    <lineage>
        <taxon>Eukaryota</taxon>
        <taxon>Metazoa</taxon>
        <taxon>Ecdysozoa</taxon>
        <taxon>Arthropoda</taxon>
        <taxon>Hexapoda</taxon>
        <taxon>Insecta</taxon>
        <taxon>Pterygota</taxon>
        <taxon>Neoptera</taxon>
        <taxon>Endopterygota</taxon>
        <taxon>Diptera</taxon>
        <taxon>Brachycera</taxon>
        <taxon>Muscomorpha</taxon>
        <taxon>Ephydroidea</taxon>
        <taxon>Drosophilidae</taxon>
        <taxon>Drosophila</taxon>
    </lineage>
</organism>
<sequence>MLRQVLSSTSVRRLLVSPTRCMSGKQNVPDKIEYSTPPEIIDYEESPHLPVPEYPIRPDEPLETRKQRLLYQSRKRGMLENDLLLSTFVAKYLKDFDAEETAQYDQLINGVSNDWDIYYWATNTKPTPPEYDTDVMKLLKQHVKNTERVQRIRQPDL</sequence>
<keyword id="KW-0143">Chaperone</keyword>
<keyword id="KW-0496">Mitochondrion</keyword>
<keyword id="KW-1185">Reference proteome</keyword>
<keyword id="KW-0809">Transit peptide</keyword>
<gene>
    <name type="ORF">GI20197</name>
</gene>
<reference key="1">
    <citation type="journal article" date="2007" name="Nature">
        <title>Evolution of genes and genomes on the Drosophila phylogeny.</title>
        <authorList>
            <consortium name="Drosophila 12 genomes consortium"/>
        </authorList>
    </citation>
    <scope>NUCLEOTIDE SEQUENCE [LARGE SCALE GENOMIC DNA]</scope>
    <source>
        <strain>Tucson 15081-1352.22</strain>
    </source>
</reference>
<dbReference type="EMBL" id="CH933808">
    <property type="protein sequence ID" value="EDW08871.1"/>
    <property type="molecule type" value="Genomic_DNA"/>
</dbReference>
<dbReference type="SMR" id="B4KN44"/>
<dbReference type="FunCoup" id="B4KN44">
    <property type="interactions" value="1272"/>
</dbReference>
<dbReference type="EnsemblMetazoa" id="FBtr0170922">
    <property type="protein sequence ID" value="FBpp0169414"/>
    <property type="gene ID" value="FBgn0142933"/>
</dbReference>
<dbReference type="EnsemblMetazoa" id="XM_002004900.4">
    <property type="protein sequence ID" value="XP_002004936.1"/>
    <property type="gene ID" value="LOC6579039"/>
</dbReference>
<dbReference type="GeneID" id="6579039"/>
<dbReference type="KEGG" id="dmo:Dmoj_GI20197"/>
<dbReference type="eggNOG" id="KOG3326">
    <property type="taxonomic scope" value="Eukaryota"/>
</dbReference>
<dbReference type="HOGENOM" id="CLU_103054_0_3_1"/>
<dbReference type="InParanoid" id="B4KN44"/>
<dbReference type="OMA" id="YGKPQNP"/>
<dbReference type="OrthoDB" id="284292at2759"/>
<dbReference type="PhylomeDB" id="B4KN44"/>
<dbReference type="Proteomes" id="UP000009192">
    <property type="component" value="Unassembled WGS sequence"/>
</dbReference>
<dbReference type="GO" id="GO:0005759">
    <property type="term" value="C:mitochondrial matrix"/>
    <property type="evidence" value="ECO:0007669"/>
    <property type="project" value="UniProtKB-SubCell"/>
</dbReference>
<dbReference type="GO" id="GO:0005739">
    <property type="term" value="C:mitochondrion"/>
    <property type="evidence" value="ECO:0000250"/>
    <property type="project" value="UniProtKB"/>
</dbReference>
<dbReference type="GO" id="GO:0006121">
    <property type="term" value="P:mitochondrial electron transport, succinate to ubiquinone"/>
    <property type="evidence" value="ECO:0000250"/>
    <property type="project" value="UniProtKB"/>
</dbReference>
<dbReference type="GO" id="GO:0034553">
    <property type="term" value="P:mitochondrial respiratory chain complex II assembly"/>
    <property type="evidence" value="ECO:0007669"/>
    <property type="project" value="TreeGrafter"/>
</dbReference>
<dbReference type="GO" id="GO:0018293">
    <property type="term" value="P:protein-FAD linkage"/>
    <property type="evidence" value="ECO:0000250"/>
    <property type="project" value="UniProtKB"/>
</dbReference>
<dbReference type="GO" id="GO:0006099">
    <property type="term" value="P:tricarboxylic acid cycle"/>
    <property type="evidence" value="ECO:0007669"/>
    <property type="project" value="TreeGrafter"/>
</dbReference>
<dbReference type="FunFam" id="1.10.150.250:FF:000002">
    <property type="entry name" value="Succinate dehydrogenase assembly factor 2, mitochondrial"/>
    <property type="match status" value="1"/>
</dbReference>
<dbReference type="Gene3D" id="1.10.150.250">
    <property type="entry name" value="Flavinator of succinate dehydrogenase"/>
    <property type="match status" value="1"/>
</dbReference>
<dbReference type="HAMAP" id="MF_03057">
    <property type="entry name" value="SDHAF2"/>
    <property type="match status" value="1"/>
</dbReference>
<dbReference type="InterPro" id="IPR005631">
    <property type="entry name" value="SDH"/>
</dbReference>
<dbReference type="InterPro" id="IPR036714">
    <property type="entry name" value="SDH_sf"/>
</dbReference>
<dbReference type="InterPro" id="IPR028882">
    <property type="entry name" value="SDHAF2"/>
</dbReference>
<dbReference type="PANTHER" id="PTHR12469">
    <property type="entry name" value="PROTEIN EMI5 HOMOLOG, MITOCHONDRIAL"/>
    <property type="match status" value="1"/>
</dbReference>
<dbReference type="PANTHER" id="PTHR12469:SF2">
    <property type="entry name" value="SUCCINATE DEHYDROGENASE ASSEMBLY FACTOR 2, MITOCHONDRIAL"/>
    <property type="match status" value="1"/>
</dbReference>
<dbReference type="Pfam" id="PF03937">
    <property type="entry name" value="Sdh5"/>
    <property type="match status" value="1"/>
</dbReference>
<dbReference type="SUPFAM" id="SSF109910">
    <property type="entry name" value="YgfY-like"/>
    <property type="match status" value="1"/>
</dbReference>
<protein>
    <recommendedName>
        <fullName evidence="1">Succinate dehydrogenase assembly factor 2-A, mitochondrial</fullName>
        <shortName evidence="1">SDH assembly factor 2-A</shortName>
        <shortName evidence="1">SDHAF2-A</shortName>
    </recommendedName>
</protein>